<sequence>MERIVVTLGERSYPITIASGLFNEPASFLPLKSGEQVMLVTNETLAPLYLDKVRGVLEQAGVNVDSVILPDGEQYKSLAVLDTVFTALLQKPHGRDTTLVALGGGVVGDLTGFAAASYQRGVRFIQVPTTLLSQVDSSVGGKTAVNHPLGKNMIGAFYQPASVVVDLDCLKTLPPRELASGLAEVIKYGIILDGAFFNWLEENLDALLRLDGPAMAYCIRRCCELKAEVVAADERETGLRALLNLGHTFGHAIEAEMGYGNWLHGEAVAAGMVMAARTSERLGQFSSAETQRIITLLKRAGLPVNGPREMSAQAYLPHMLRDKKVLAGEIRLILPLAIGKSEVRSGVSHELVLNAIADCQSA</sequence>
<proteinExistence type="inferred from homology"/>
<reference key="1">
    <citation type="journal article" date="2005" name="Nucleic Acids Res.">
        <title>Genome dynamics and diversity of Shigella species, the etiologic agents of bacillary dysentery.</title>
        <authorList>
            <person name="Yang F."/>
            <person name="Yang J."/>
            <person name="Zhang X."/>
            <person name="Chen L."/>
            <person name="Jiang Y."/>
            <person name="Yan Y."/>
            <person name="Tang X."/>
            <person name="Wang J."/>
            <person name="Xiong Z."/>
            <person name="Dong J."/>
            <person name="Xue Y."/>
            <person name="Zhu Y."/>
            <person name="Xu X."/>
            <person name="Sun L."/>
            <person name="Chen S."/>
            <person name="Nie H."/>
            <person name="Peng J."/>
            <person name="Xu J."/>
            <person name="Wang Y."/>
            <person name="Yuan Z."/>
            <person name="Wen Y."/>
            <person name="Yao Z."/>
            <person name="Shen Y."/>
            <person name="Qiang B."/>
            <person name="Hou Y."/>
            <person name="Yu J."/>
            <person name="Jin Q."/>
        </authorList>
    </citation>
    <scope>NUCLEOTIDE SEQUENCE [LARGE SCALE GENOMIC DNA]</scope>
    <source>
        <strain>Ss046</strain>
    </source>
</reference>
<keyword id="KW-0028">Amino-acid biosynthesis</keyword>
<keyword id="KW-0057">Aromatic amino acid biosynthesis</keyword>
<keyword id="KW-0170">Cobalt</keyword>
<keyword id="KW-0963">Cytoplasm</keyword>
<keyword id="KW-0456">Lyase</keyword>
<keyword id="KW-0479">Metal-binding</keyword>
<keyword id="KW-0520">NAD</keyword>
<keyword id="KW-0547">Nucleotide-binding</keyword>
<keyword id="KW-1185">Reference proteome</keyword>
<keyword id="KW-0862">Zinc</keyword>
<evidence type="ECO:0000255" key="1">
    <source>
        <dbReference type="HAMAP-Rule" id="MF_00110"/>
    </source>
</evidence>
<name>AROB_SHISS</name>
<feature type="chain" id="PRO_0000231127" description="3-dehydroquinate synthase">
    <location>
        <begin position="1"/>
        <end position="362"/>
    </location>
</feature>
<feature type="binding site" evidence="1">
    <location>
        <begin position="71"/>
        <end position="76"/>
    </location>
    <ligand>
        <name>NAD(+)</name>
        <dbReference type="ChEBI" id="CHEBI:57540"/>
    </ligand>
</feature>
<feature type="binding site" evidence="1">
    <location>
        <begin position="105"/>
        <end position="109"/>
    </location>
    <ligand>
        <name>NAD(+)</name>
        <dbReference type="ChEBI" id="CHEBI:57540"/>
    </ligand>
</feature>
<feature type="binding site" evidence="1">
    <location>
        <begin position="129"/>
        <end position="130"/>
    </location>
    <ligand>
        <name>NAD(+)</name>
        <dbReference type="ChEBI" id="CHEBI:57540"/>
    </ligand>
</feature>
<feature type="binding site" evidence="1">
    <location>
        <position position="142"/>
    </location>
    <ligand>
        <name>NAD(+)</name>
        <dbReference type="ChEBI" id="CHEBI:57540"/>
    </ligand>
</feature>
<feature type="binding site" evidence="1">
    <location>
        <position position="151"/>
    </location>
    <ligand>
        <name>NAD(+)</name>
        <dbReference type="ChEBI" id="CHEBI:57540"/>
    </ligand>
</feature>
<feature type="binding site" evidence="1">
    <location>
        <begin position="169"/>
        <end position="172"/>
    </location>
    <ligand>
        <name>NAD(+)</name>
        <dbReference type="ChEBI" id="CHEBI:57540"/>
    </ligand>
</feature>
<feature type="binding site" evidence="1">
    <location>
        <position position="184"/>
    </location>
    <ligand>
        <name>Zn(2+)</name>
        <dbReference type="ChEBI" id="CHEBI:29105"/>
    </ligand>
</feature>
<feature type="binding site" evidence="1">
    <location>
        <position position="247"/>
    </location>
    <ligand>
        <name>Zn(2+)</name>
        <dbReference type="ChEBI" id="CHEBI:29105"/>
    </ligand>
</feature>
<feature type="binding site" evidence="1">
    <location>
        <position position="264"/>
    </location>
    <ligand>
        <name>Zn(2+)</name>
        <dbReference type="ChEBI" id="CHEBI:29105"/>
    </ligand>
</feature>
<accession>Q3YWN4</accession>
<dbReference type="EC" id="4.2.3.4" evidence="1"/>
<dbReference type="EMBL" id="CP000038">
    <property type="protein sequence ID" value="AAZ90078.1"/>
    <property type="molecule type" value="Genomic_DNA"/>
</dbReference>
<dbReference type="RefSeq" id="WP_000439846.1">
    <property type="nucleotide sequence ID" value="NC_007384.1"/>
</dbReference>
<dbReference type="SMR" id="Q3YWN4"/>
<dbReference type="GeneID" id="93778609"/>
<dbReference type="KEGG" id="ssn:SSON_3520"/>
<dbReference type="HOGENOM" id="CLU_001201_0_2_6"/>
<dbReference type="UniPathway" id="UPA00053">
    <property type="reaction ID" value="UER00085"/>
</dbReference>
<dbReference type="Proteomes" id="UP000002529">
    <property type="component" value="Chromosome"/>
</dbReference>
<dbReference type="GO" id="GO:0005737">
    <property type="term" value="C:cytoplasm"/>
    <property type="evidence" value="ECO:0007669"/>
    <property type="project" value="UniProtKB-SubCell"/>
</dbReference>
<dbReference type="GO" id="GO:0003856">
    <property type="term" value="F:3-dehydroquinate synthase activity"/>
    <property type="evidence" value="ECO:0007669"/>
    <property type="project" value="UniProtKB-UniRule"/>
</dbReference>
<dbReference type="GO" id="GO:0046872">
    <property type="term" value="F:metal ion binding"/>
    <property type="evidence" value="ECO:0007669"/>
    <property type="project" value="UniProtKB-KW"/>
</dbReference>
<dbReference type="GO" id="GO:0000166">
    <property type="term" value="F:nucleotide binding"/>
    <property type="evidence" value="ECO:0007669"/>
    <property type="project" value="UniProtKB-KW"/>
</dbReference>
<dbReference type="GO" id="GO:0008652">
    <property type="term" value="P:amino acid biosynthetic process"/>
    <property type="evidence" value="ECO:0007669"/>
    <property type="project" value="UniProtKB-KW"/>
</dbReference>
<dbReference type="GO" id="GO:0009073">
    <property type="term" value="P:aromatic amino acid family biosynthetic process"/>
    <property type="evidence" value="ECO:0007669"/>
    <property type="project" value="UniProtKB-KW"/>
</dbReference>
<dbReference type="GO" id="GO:0009423">
    <property type="term" value="P:chorismate biosynthetic process"/>
    <property type="evidence" value="ECO:0007669"/>
    <property type="project" value="UniProtKB-UniRule"/>
</dbReference>
<dbReference type="CDD" id="cd08195">
    <property type="entry name" value="DHQS"/>
    <property type="match status" value="1"/>
</dbReference>
<dbReference type="FunFam" id="1.20.1090.10:FF:000002">
    <property type="entry name" value="3-dehydroquinate synthase"/>
    <property type="match status" value="1"/>
</dbReference>
<dbReference type="FunFam" id="3.40.50.1970:FF:000001">
    <property type="entry name" value="3-dehydroquinate synthase"/>
    <property type="match status" value="1"/>
</dbReference>
<dbReference type="Gene3D" id="3.40.50.1970">
    <property type="match status" value="1"/>
</dbReference>
<dbReference type="Gene3D" id="1.20.1090.10">
    <property type="entry name" value="Dehydroquinate synthase-like - alpha domain"/>
    <property type="match status" value="1"/>
</dbReference>
<dbReference type="HAMAP" id="MF_00110">
    <property type="entry name" value="DHQ_synthase"/>
    <property type="match status" value="1"/>
</dbReference>
<dbReference type="InterPro" id="IPR050071">
    <property type="entry name" value="Dehydroquinate_synthase"/>
</dbReference>
<dbReference type="InterPro" id="IPR016037">
    <property type="entry name" value="DHQ_synth_AroB"/>
</dbReference>
<dbReference type="InterPro" id="IPR030963">
    <property type="entry name" value="DHQ_synth_fam"/>
</dbReference>
<dbReference type="InterPro" id="IPR030960">
    <property type="entry name" value="DHQS/DOIS_N"/>
</dbReference>
<dbReference type="InterPro" id="IPR056179">
    <property type="entry name" value="DHQS_C"/>
</dbReference>
<dbReference type="NCBIfam" id="TIGR01357">
    <property type="entry name" value="aroB"/>
    <property type="match status" value="1"/>
</dbReference>
<dbReference type="PANTHER" id="PTHR43622">
    <property type="entry name" value="3-DEHYDROQUINATE SYNTHASE"/>
    <property type="match status" value="1"/>
</dbReference>
<dbReference type="PANTHER" id="PTHR43622:SF7">
    <property type="entry name" value="3-DEHYDROQUINATE SYNTHASE, CHLOROPLASTIC"/>
    <property type="match status" value="1"/>
</dbReference>
<dbReference type="Pfam" id="PF01761">
    <property type="entry name" value="DHQ_synthase"/>
    <property type="match status" value="1"/>
</dbReference>
<dbReference type="Pfam" id="PF24621">
    <property type="entry name" value="DHQS_C"/>
    <property type="match status" value="1"/>
</dbReference>
<dbReference type="PIRSF" id="PIRSF001455">
    <property type="entry name" value="DHQ_synth"/>
    <property type="match status" value="1"/>
</dbReference>
<dbReference type="SUPFAM" id="SSF56796">
    <property type="entry name" value="Dehydroquinate synthase-like"/>
    <property type="match status" value="1"/>
</dbReference>
<organism>
    <name type="scientific">Shigella sonnei (strain Ss046)</name>
    <dbReference type="NCBI Taxonomy" id="300269"/>
    <lineage>
        <taxon>Bacteria</taxon>
        <taxon>Pseudomonadati</taxon>
        <taxon>Pseudomonadota</taxon>
        <taxon>Gammaproteobacteria</taxon>
        <taxon>Enterobacterales</taxon>
        <taxon>Enterobacteriaceae</taxon>
        <taxon>Shigella</taxon>
    </lineage>
</organism>
<comment type="function">
    <text evidence="1">Catalyzes the conversion of 3-deoxy-D-arabino-heptulosonate 7-phosphate (DAHP) to dehydroquinate (DHQ).</text>
</comment>
<comment type="catalytic activity">
    <reaction evidence="1">
        <text>7-phospho-2-dehydro-3-deoxy-D-arabino-heptonate = 3-dehydroquinate + phosphate</text>
        <dbReference type="Rhea" id="RHEA:21968"/>
        <dbReference type="ChEBI" id="CHEBI:32364"/>
        <dbReference type="ChEBI" id="CHEBI:43474"/>
        <dbReference type="ChEBI" id="CHEBI:58394"/>
        <dbReference type="EC" id="4.2.3.4"/>
    </reaction>
</comment>
<comment type="cofactor">
    <cofactor evidence="1">
        <name>Co(2+)</name>
        <dbReference type="ChEBI" id="CHEBI:48828"/>
    </cofactor>
    <cofactor evidence="1">
        <name>Zn(2+)</name>
        <dbReference type="ChEBI" id="CHEBI:29105"/>
    </cofactor>
    <text evidence="1">Binds 1 divalent metal cation per subunit. Can use either Co(2+) or Zn(2+).</text>
</comment>
<comment type="cofactor">
    <cofactor evidence="1">
        <name>NAD(+)</name>
        <dbReference type="ChEBI" id="CHEBI:57540"/>
    </cofactor>
</comment>
<comment type="pathway">
    <text evidence="1">Metabolic intermediate biosynthesis; chorismate biosynthesis; chorismate from D-erythrose 4-phosphate and phosphoenolpyruvate: step 2/7.</text>
</comment>
<comment type="subcellular location">
    <subcellularLocation>
        <location evidence="1">Cytoplasm</location>
    </subcellularLocation>
</comment>
<comment type="similarity">
    <text evidence="1">Belongs to the sugar phosphate cyclases superfamily. Dehydroquinate synthase family.</text>
</comment>
<protein>
    <recommendedName>
        <fullName evidence="1">3-dehydroquinate synthase</fullName>
        <shortName evidence="1">DHQS</shortName>
        <ecNumber evidence="1">4.2.3.4</ecNumber>
    </recommendedName>
</protein>
<gene>
    <name evidence="1" type="primary">aroB</name>
    <name type="ordered locus">SSON_3520</name>
</gene>